<evidence type="ECO:0000255" key="1">
    <source>
        <dbReference type="HAMAP-Rule" id="MF_01302"/>
    </source>
</evidence>
<evidence type="ECO:0000305" key="2"/>
<keyword id="KW-1185">Reference proteome</keyword>
<keyword id="KW-0687">Ribonucleoprotein</keyword>
<keyword id="KW-0689">Ribosomal protein</keyword>
<keyword id="KW-0694">RNA-binding</keyword>
<keyword id="KW-0699">rRNA-binding</keyword>
<name>RS8_GLUDA</name>
<reference key="1">
    <citation type="journal article" date="2009" name="BMC Genomics">
        <title>Complete genome sequence of the sugarcane nitrogen-fixing endophyte Gluconacetobacter diazotrophicus Pal5.</title>
        <authorList>
            <person name="Bertalan M."/>
            <person name="Albano R."/>
            <person name="de Padua V."/>
            <person name="Rouws L."/>
            <person name="Rojas C."/>
            <person name="Hemerly A."/>
            <person name="Teixeira K."/>
            <person name="Schwab S."/>
            <person name="Araujo J."/>
            <person name="Oliveira A."/>
            <person name="Franca L."/>
            <person name="Magalhaes V."/>
            <person name="Alqueres S."/>
            <person name="Cardoso A."/>
            <person name="Almeida W."/>
            <person name="Loureiro M.M."/>
            <person name="Nogueira E."/>
            <person name="Cidade D."/>
            <person name="Oliveira D."/>
            <person name="Simao T."/>
            <person name="Macedo J."/>
            <person name="Valadao A."/>
            <person name="Dreschsel M."/>
            <person name="Freitas F."/>
            <person name="Vidal M."/>
            <person name="Guedes H."/>
            <person name="Rodrigues E."/>
            <person name="Meneses C."/>
            <person name="Brioso P."/>
            <person name="Pozzer L."/>
            <person name="Figueiredo D."/>
            <person name="Montano H."/>
            <person name="Junior J."/>
            <person name="de Souza Filho G."/>
            <person name="Martin Quintana Flores V."/>
            <person name="Ferreira B."/>
            <person name="Branco A."/>
            <person name="Gonzalez P."/>
            <person name="Guillobel H."/>
            <person name="Lemos M."/>
            <person name="Seibel L."/>
            <person name="Macedo J."/>
            <person name="Alves-Ferreira M."/>
            <person name="Sachetto-Martins G."/>
            <person name="Coelho A."/>
            <person name="Santos E."/>
            <person name="Amaral G."/>
            <person name="Neves A."/>
            <person name="Pacheco A.B."/>
            <person name="Carvalho D."/>
            <person name="Lery L."/>
            <person name="Bisch P."/>
            <person name="Rossle S.C."/>
            <person name="Urmenyi T."/>
            <person name="Rael Pereira A."/>
            <person name="Silva R."/>
            <person name="Rondinelli E."/>
            <person name="von Kruger W."/>
            <person name="Martins O."/>
            <person name="Baldani J.I."/>
            <person name="Ferreira P.C."/>
        </authorList>
    </citation>
    <scope>NUCLEOTIDE SEQUENCE [LARGE SCALE GENOMIC DNA]</scope>
    <source>
        <strain>ATCC 49037 / DSM 5601 / CCUG 37298 / CIP 103539 / LMG 7603 / PAl5</strain>
    </source>
</reference>
<reference key="2">
    <citation type="journal article" date="2010" name="Stand. Genomic Sci.">
        <title>Two genome sequences of the same bacterial strain, Gluconacetobacter diazotrophicus PAl 5, suggest a new standard in genome sequence submission.</title>
        <authorList>
            <person name="Giongo A."/>
            <person name="Tyler H.L."/>
            <person name="Zipperer U.N."/>
            <person name="Triplett E.W."/>
        </authorList>
    </citation>
    <scope>NUCLEOTIDE SEQUENCE [LARGE SCALE GENOMIC DNA]</scope>
    <source>
        <strain>ATCC 49037 / DSM 5601 / CCUG 37298 / CIP 103539 / LMG 7603 / PAl5</strain>
    </source>
</reference>
<proteinExistence type="inferred from homology"/>
<organism>
    <name type="scientific">Gluconacetobacter diazotrophicus (strain ATCC 49037 / DSM 5601 / CCUG 37298 / CIP 103539 / LMG 7603 / PAl5)</name>
    <dbReference type="NCBI Taxonomy" id="272568"/>
    <lineage>
        <taxon>Bacteria</taxon>
        <taxon>Pseudomonadati</taxon>
        <taxon>Pseudomonadota</taxon>
        <taxon>Alphaproteobacteria</taxon>
        <taxon>Acetobacterales</taxon>
        <taxon>Acetobacteraceae</taxon>
        <taxon>Gluconacetobacter</taxon>
    </lineage>
</organism>
<dbReference type="EMBL" id="AM889285">
    <property type="protein sequence ID" value="CAP57333.1"/>
    <property type="molecule type" value="Genomic_DNA"/>
</dbReference>
<dbReference type="EMBL" id="CP001189">
    <property type="protein sequence ID" value="ACI52710.1"/>
    <property type="molecule type" value="Genomic_DNA"/>
</dbReference>
<dbReference type="RefSeq" id="WP_012227937.1">
    <property type="nucleotide sequence ID" value="NC_010125.1"/>
</dbReference>
<dbReference type="SMR" id="A9H3M1"/>
<dbReference type="STRING" id="272568.GDI3390"/>
<dbReference type="KEGG" id="gdi:GDI3390"/>
<dbReference type="KEGG" id="gdj:Gdia_2980"/>
<dbReference type="eggNOG" id="COG0096">
    <property type="taxonomic scope" value="Bacteria"/>
</dbReference>
<dbReference type="HOGENOM" id="CLU_098428_0_0_5"/>
<dbReference type="OrthoDB" id="9802617at2"/>
<dbReference type="Proteomes" id="UP000001176">
    <property type="component" value="Chromosome"/>
</dbReference>
<dbReference type="GO" id="GO:1990904">
    <property type="term" value="C:ribonucleoprotein complex"/>
    <property type="evidence" value="ECO:0007669"/>
    <property type="project" value="UniProtKB-KW"/>
</dbReference>
<dbReference type="GO" id="GO:0005840">
    <property type="term" value="C:ribosome"/>
    <property type="evidence" value="ECO:0007669"/>
    <property type="project" value="UniProtKB-KW"/>
</dbReference>
<dbReference type="GO" id="GO:0019843">
    <property type="term" value="F:rRNA binding"/>
    <property type="evidence" value="ECO:0007669"/>
    <property type="project" value="UniProtKB-UniRule"/>
</dbReference>
<dbReference type="GO" id="GO:0003735">
    <property type="term" value="F:structural constituent of ribosome"/>
    <property type="evidence" value="ECO:0007669"/>
    <property type="project" value="InterPro"/>
</dbReference>
<dbReference type="GO" id="GO:0006412">
    <property type="term" value="P:translation"/>
    <property type="evidence" value="ECO:0007669"/>
    <property type="project" value="UniProtKB-UniRule"/>
</dbReference>
<dbReference type="FunFam" id="3.30.1490.10:FF:000001">
    <property type="entry name" value="30S ribosomal protein S8"/>
    <property type="match status" value="1"/>
</dbReference>
<dbReference type="Gene3D" id="3.30.1370.30">
    <property type="match status" value="1"/>
</dbReference>
<dbReference type="Gene3D" id="3.30.1490.10">
    <property type="match status" value="1"/>
</dbReference>
<dbReference type="HAMAP" id="MF_01302_B">
    <property type="entry name" value="Ribosomal_uS8_B"/>
    <property type="match status" value="1"/>
</dbReference>
<dbReference type="InterPro" id="IPR000630">
    <property type="entry name" value="Ribosomal_uS8"/>
</dbReference>
<dbReference type="InterPro" id="IPR047863">
    <property type="entry name" value="Ribosomal_uS8_CS"/>
</dbReference>
<dbReference type="InterPro" id="IPR035987">
    <property type="entry name" value="Ribosomal_uS8_sf"/>
</dbReference>
<dbReference type="NCBIfam" id="NF001109">
    <property type="entry name" value="PRK00136.1"/>
    <property type="match status" value="1"/>
</dbReference>
<dbReference type="PANTHER" id="PTHR11758">
    <property type="entry name" value="40S RIBOSOMAL PROTEIN S15A"/>
    <property type="match status" value="1"/>
</dbReference>
<dbReference type="Pfam" id="PF00410">
    <property type="entry name" value="Ribosomal_S8"/>
    <property type="match status" value="1"/>
</dbReference>
<dbReference type="SUPFAM" id="SSF56047">
    <property type="entry name" value="Ribosomal protein S8"/>
    <property type="match status" value="1"/>
</dbReference>
<dbReference type="PROSITE" id="PS00053">
    <property type="entry name" value="RIBOSOMAL_S8"/>
    <property type="match status" value="1"/>
</dbReference>
<gene>
    <name evidence="1" type="primary">rpsH</name>
    <name type="ordered locus">GDI3390</name>
    <name type="ordered locus">Gdia_2980</name>
</gene>
<sequence length="132" mass="14595">MSLSDPLGDMLTRIRNAQRARHAACVAPASKLRANVLEALRREGYIRGYAQEDLRKGVAQLRIELKYLDGEPVIKEIHRVSKPGRRVYSKIKELPRVYAGLGVSILSTPRGVLSDAEARAANVGGEVLCRVF</sequence>
<accession>A9H3M1</accession>
<accession>B5ZIH7</accession>
<protein>
    <recommendedName>
        <fullName evidence="1">Small ribosomal subunit protein uS8</fullName>
    </recommendedName>
    <alternativeName>
        <fullName evidence="2">30S ribosomal protein S8</fullName>
    </alternativeName>
</protein>
<comment type="function">
    <text evidence="1">One of the primary rRNA binding proteins, it binds directly to 16S rRNA central domain where it helps coordinate assembly of the platform of the 30S subunit.</text>
</comment>
<comment type="subunit">
    <text evidence="1">Part of the 30S ribosomal subunit. Contacts proteins S5 and S12.</text>
</comment>
<comment type="similarity">
    <text evidence="1">Belongs to the universal ribosomal protein uS8 family.</text>
</comment>
<feature type="chain" id="PRO_1000085925" description="Small ribosomal subunit protein uS8">
    <location>
        <begin position="1"/>
        <end position="132"/>
    </location>
</feature>